<organism>
    <name type="scientific">Thermoplasma acidophilum (strain ATCC 25905 / DSM 1728 / JCM 9062 / NBRC 15155 / AMRC-C165)</name>
    <dbReference type="NCBI Taxonomy" id="273075"/>
    <lineage>
        <taxon>Archaea</taxon>
        <taxon>Methanobacteriati</taxon>
        <taxon>Thermoplasmatota</taxon>
        <taxon>Thermoplasmata</taxon>
        <taxon>Thermoplasmatales</taxon>
        <taxon>Thermoplasmataceae</taxon>
        <taxon>Thermoplasma</taxon>
    </lineage>
</organism>
<keyword id="KW-0002">3D-structure</keyword>
<keyword id="KW-0067">ATP-binding</keyword>
<keyword id="KW-0315">Glutamine amidotransferase</keyword>
<keyword id="KW-0332">GMP biosynthesis</keyword>
<keyword id="KW-0436">Ligase</keyword>
<keyword id="KW-0547">Nucleotide-binding</keyword>
<keyword id="KW-0658">Purine biosynthesis</keyword>
<keyword id="KW-1185">Reference proteome</keyword>
<proteinExistence type="evidence at protein level"/>
<accession>Q9HJM3</accession>
<gene>
    <name evidence="1" type="primary">guaAA</name>
    <name type="ordered locus">Ta0944</name>
</gene>
<dbReference type="EC" id="6.3.5.2" evidence="1"/>
<dbReference type="EMBL" id="AL445066">
    <property type="protein sequence ID" value="CAC12073.1"/>
    <property type="status" value="ALT_INIT"/>
    <property type="molecule type" value="Genomic_DNA"/>
</dbReference>
<dbReference type="RefSeq" id="WP_010901354.1">
    <property type="nucleotide sequence ID" value="NC_002578.1"/>
</dbReference>
<dbReference type="PDB" id="2A9V">
    <property type="method" value="X-ray"/>
    <property type="resolution" value="2.24 A"/>
    <property type="chains" value="A/B/C/D=1-200"/>
</dbReference>
<dbReference type="PDBsum" id="2A9V"/>
<dbReference type="SMR" id="Q9HJM3"/>
<dbReference type="FunCoup" id="Q9HJM3">
    <property type="interactions" value="28"/>
</dbReference>
<dbReference type="STRING" id="273075.gene:9572162"/>
<dbReference type="MEROPS" id="C26.A31"/>
<dbReference type="PaxDb" id="273075-Ta0944m"/>
<dbReference type="EnsemblBacteria" id="CAC12073">
    <property type="protein sequence ID" value="CAC12073"/>
    <property type="gene ID" value="CAC12073"/>
</dbReference>
<dbReference type="KEGG" id="tac:Ta0944"/>
<dbReference type="eggNOG" id="arCOG00087">
    <property type="taxonomic scope" value="Archaea"/>
</dbReference>
<dbReference type="HOGENOM" id="CLU_014340_1_4_2"/>
<dbReference type="InParanoid" id="Q9HJM3"/>
<dbReference type="OrthoDB" id="10772at2157"/>
<dbReference type="UniPathway" id="UPA00189">
    <property type="reaction ID" value="UER00296"/>
</dbReference>
<dbReference type="EvolutionaryTrace" id="Q9HJM3"/>
<dbReference type="Proteomes" id="UP000001024">
    <property type="component" value="Chromosome"/>
</dbReference>
<dbReference type="GO" id="GO:0005829">
    <property type="term" value="C:cytosol"/>
    <property type="evidence" value="ECO:0007669"/>
    <property type="project" value="TreeGrafter"/>
</dbReference>
<dbReference type="GO" id="GO:0005524">
    <property type="term" value="F:ATP binding"/>
    <property type="evidence" value="ECO:0007669"/>
    <property type="project" value="UniProtKB-KW"/>
</dbReference>
<dbReference type="GO" id="GO:0003921">
    <property type="term" value="F:GMP synthase activity"/>
    <property type="evidence" value="ECO:0007669"/>
    <property type="project" value="TreeGrafter"/>
</dbReference>
<dbReference type="CDD" id="cd01742">
    <property type="entry name" value="GATase1_GMP_Synthase"/>
    <property type="match status" value="1"/>
</dbReference>
<dbReference type="FunFam" id="3.40.50.880:FF:000047">
    <property type="entry name" value="GMP synthase [glutamine-hydrolyzing] subunit A"/>
    <property type="match status" value="1"/>
</dbReference>
<dbReference type="Gene3D" id="3.40.50.880">
    <property type="match status" value="1"/>
</dbReference>
<dbReference type="HAMAP" id="MF_01510">
    <property type="entry name" value="GMP_synthase_A"/>
    <property type="match status" value="1"/>
</dbReference>
<dbReference type="InterPro" id="IPR029062">
    <property type="entry name" value="Class_I_gatase-like"/>
</dbReference>
<dbReference type="InterPro" id="IPR017926">
    <property type="entry name" value="GATASE"/>
</dbReference>
<dbReference type="InterPro" id="IPR004739">
    <property type="entry name" value="GMP_synth_GATase"/>
</dbReference>
<dbReference type="InterPro" id="IPR023686">
    <property type="entry name" value="GMP_synthase_A"/>
</dbReference>
<dbReference type="NCBIfam" id="TIGR00888">
    <property type="entry name" value="guaA_Nterm"/>
    <property type="match status" value="1"/>
</dbReference>
<dbReference type="NCBIfam" id="NF001975">
    <property type="entry name" value="PRK00758.1"/>
    <property type="match status" value="1"/>
</dbReference>
<dbReference type="PANTHER" id="PTHR11922:SF2">
    <property type="entry name" value="GMP SYNTHASE [GLUTAMINE-HYDROLYZING]"/>
    <property type="match status" value="1"/>
</dbReference>
<dbReference type="PANTHER" id="PTHR11922">
    <property type="entry name" value="GMP SYNTHASE-RELATED"/>
    <property type="match status" value="1"/>
</dbReference>
<dbReference type="Pfam" id="PF00117">
    <property type="entry name" value="GATase"/>
    <property type="match status" value="1"/>
</dbReference>
<dbReference type="PRINTS" id="PR00097">
    <property type="entry name" value="ANTSNTHASEII"/>
</dbReference>
<dbReference type="SUPFAM" id="SSF52317">
    <property type="entry name" value="Class I glutamine amidotransferase-like"/>
    <property type="match status" value="1"/>
</dbReference>
<dbReference type="PROSITE" id="PS51273">
    <property type="entry name" value="GATASE_TYPE_1"/>
    <property type="match status" value="1"/>
</dbReference>
<comment type="function">
    <text evidence="1">Catalyzes the synthesis of GMP from XMP.</text>
</comment>
<comment type="catalytic activity">
    <reaction evidence="1">
        <text>XMP + L-glutamine + ATP + H2O = GMP + L-glutamate + AMP + diphosphate + 2 H(+)</text>
        <dbReference type="Rhea" id="RHEA:11680"/>
        <dbReference type="ChEBI" id="CHEBI:15377"/>
        <dbReference type="ChEBI" id="CHEBI:15378"/>
        <dbReference type="ChEBI" id="CHEBI:29985"/>
        <dbReference type="ChEBI" id="CHEBI:30616"/>
        <dbReference type="ChEBI" id="CHEBI:33019"/>
        <dbReference type="ChEBI" id="CHEBI:57464"/>
        <dbReference type="ChEBI" id="CHEBI:58115"/>
        <dbReference type="ChEBI" id="CHEBI:58359"/>
        <dbReference type="ChEBI" id="CHEBI:456215"/>
        <dbReference type="EC" id="6.3.5.2"/>
    </reaction>
</comment>
<comment type="pathway">
    <text evidence="1">Purine metabolism; GMP biosynthesis; GMP from XMP (L-Gln route): step 1/1.</text>
</comment>
<comment type="subunit">
    <text evidence="1">Heterodimer composed of a glutamine amidotransferase subunit (A) and a GMP-binding subunit (B).</text>
</comment>
<comment type="sequence caution" evidence="2">
    <conflict type="erroneous initiation">
        <sequence resource="EMBL-CDS" id="CAC12073"/>
    </conflict>
</comment>
<feature type="chain" id="PRO_0000140235" description="GMP synthase [glutamine-hydrolyzing] subunit A">
    <location>
        <begin position="1"/>
        <end position="200"/>
    </location>
</feature>
<feature type="domain" description="Glutamine amidotransferase type-1" evidence="1">
    <location>
        <begin position="3"/>
        <end position="193"/>
    </location>
</feature>
<feature type="active site" description="Nucleophile" evidence="1">
    <location>
        <position position="80"/>
    </location>
</feature>
<feature type="active site" evidence="1">
    <location>
        <position position="167"/>
    </location>
</feature>
<feature type="active site" evidence="1">
    <location>
        <position position="169"/>
    </location>
</feature>
<feature type="strand" evidence="3">
    <location>
        <begin position="3"/>
        <end position="10"/>
    </location>
</feature>
<feature type="helix" evidence="3">
    <location>
        <begin position="16"/>
        <end position="23"/>
    </location>
</feature>
<feature type="strand" evidence="3">
    <location>
        <begin position="30"/>
        <end position="32"/>
    </location>
</feature>
<feature type="helix" evidence="3">
    <location>
        <begin position="37"/>
        <end position="40"/>
    </location>
</feature>
<feature type="strand" evidence="3">
    <location>
        <begin position="44"/>
        <end position="48"/>
    </location>
</feature>
<feature type="helix" evidence="3">
    <location>
        <begin position="55"/>
        <end position="57"/>
    </location>
</feature>
<feature type="helix" evidence="3">
    <location>
        <begin position="59"/>
        <end position="61"/>
    </location>
</feature>
<feature type="helix" evidence="3">
    <location>
        <begin position="62"/>
        <end position="71"/>
    </location>
</feature>
<feature type="strand" evidence="3">
    <location>
        <begin position="76"/>
        <end position="79"/>
    </location>
</feature>
<feature type="helix" evidence="3">
    <location>
        <begin position="81"/>
        <end position="89"/>
    </location>
</feature>
<feature type="strand" evidence="3">
    <location>
        <begin position="93"/>
        <end position="110"/>
    </location>
</feature>
<feature type="helix" evidence="3">
    <location>
        <begin position="114"/>
        <end position="116"/>
    </location>
</feature>
<feature type="strand" evidence="3">
    <location>
        <begin position="121"/>
        <end position="135"/>
    </location>
</feature>
<feature type="strand" evidence="3">
    <location>
        <begin position="140"/>
        <end position="145"/>
    </location>
</feature>
<feature type="strand" evidence="3">
    <location>
        <begin position="152"/>
        <end position="166"/>
    </location>
</feature>
<feature type="helix" evidence="3">
    <location>
        <begin position="176"/>
        <end position="195"/>
    </location>
</feature>
<evidence type="ECO:0000255" key="1">
    <source>
        <dbReference type="HAMAP-Rule" id="MF_01510"/>
    </source>
</evidence>
<evidence type="ECO:0000305" key="2"/>
<evidence type="ECO:0007829" key="3">
    <source>
        <dbReference type="PDB" id="2A9V"/>
    </source>
</evidence>
<sequence>MLKIYVVDNGGQWTHREWRVLRELGVDTKIVPNDIDSSELDGLDGLVLSGGAPNIDEELDKLGSVGKYIDDHNYPILGICVGAQFIALHFGASVVKAKHPEFGKTKVSVMHSENIFGGLPSEITVWENHNDEIINLPDDFTLAASSATCQVQGFYHKTRPIYATQFHPEVEHTQYGRDIFRNFIGICASYREIQKENFQH</sequence>
<protein>
    <recommendedName>
        <fullName evidence="1">GMP synthase [glutamine-hydrolyzing] subunit A</fullName>
        <ecNumber evidence="1">6.3.5.2</ecNumber>
    </recommendedName>
    <alternativeName>
        <fullName evidence="1">Glutamine amidotransferase</fullName>
    </alternativeName>
</protein>
<name>GUAAA_THEAC</name>
<reference key="1">
    <citation type="journal article" date="2000" name="Nature">
        <title>The genome sequence of the thermoacidophilic scavenger Thermoplasma acidophilum.</title>
        <authorList>
            <person name="Ruepp A."/>
            <person name="Graml W."/>
            <person name="Santos-Martinez M.-L."/>
            <person name="Koretke K.K."/>
            <person name="Volker C."/>
            <person name="Mewes H.-W."/>
            <person name="Frishman D."/>
            <person name="Stocker S."/>
            <person name="Lupas A.N."/>
            <person name="Baumeister W."/>
        </authorList>
    </citation>
    <scope>NUCLEOTIDE SEQUENCE [LARGE SCALE GENOMIC DNA]</scope>
    <source>
        <strain>ATCC 25905 / DSM 1728 / JCM 9062 / NBRC 15155 / AMRC-C165</strain>
    </source>
</reference>